<reference key="1">
    <citation type="journal article" date="1998" name="Nature">
        <title>Deciphering the biology of Mycobacterium tuberculosis from the complete genome sequence.</title>
        <authorList>
            <person name="Cole S.T."/>
            <person name="Brosch R."/>
            <person name="Parkhill J."/>
            <person name="Garnier T."/>
            <person name="Churcher C.M."/>
            <person name="Harris D.E."/>
            <person name="Gordon S.V."/>
            <person name="Eiglmeier K."/>
            <person name="Gas S."/>
            <person name="Barry C.E. III"/>
            <person name="Tekaia F."/>
            <person name="Badcock K."/>
            <person name="Basham D."/>
            <person name="Brown D."/>
            <person name="Chillingworth T."/>
            <person name="Connor R."/>
            <person name="Davies R.M."/>
            <person name="Devlin K."/>
            <person name="Feltwell T."/>
            <person name="Gentles S."/>
            <person name="Hamlin N."/>
            <person name="Holroyd S."/>
            <person name="Hornsby T."/>
            <person name="Jagels K."/>
            <person name="Krogh A."/>
            <person name="McLean J."/>
            <person name="Moule S."/>
            <person name="Murphy L.D."/>
            <person name="Oliver S."/>
            <person name="Osborne J."/>
            <person name="Quail M.A."/>
            <person name="Rajandream M.A."/>
            <person name="Rogers J."/>
            <person name="Rutter S."/>
            <person name="Seeger K."/>
            <person name="Skelton S."/>
            <person name="Squares S."/>
            <person name="Squares R."/>
            <person name="Sulston J.E."/>
            <person name="Taylor K."/>
            <person name="Whitehead S."/>
            <person name="Barrell B.G."/>
        </authorList>
    </citation>
    <scope>NUCLEOTIDE SEQUENCE [LARGE SCALE GENOMIC DNA]</scope>
    <source>
        <strain>ATCC 25618 / H37Rv</strain>
    </source>
</reference>
<reference key="2">
    <citation type="journal article" date="2006" name="J. Infect. Dis.">
        <title>Mycobacterium tuberculosis invasion and traversal across an in vitro human blood-brain barrier as a pathogenic mechanism for central nervous system tuberculosis.</title>
        <authorList>
            <person name="Jain S.K."/>
            <person name="Paul-Satyaseela M."/>
            <person name="Lamichhane G."/>
            <person name="Kim K.S."/>
            <person name="Bishai W.R."/>
        </authorList>
    </citation>
    <scope>FUNCTION</scope>
    <scope>INDUCTION</scope>
    <scope>DISRUPTION PHENOTYPE</scope>
    <source>
        <strain>ATCC 25618 / H37Rv</strain>
    </source>
</reference>
<accession>P9WI09</accession>
<accession>L0T7Q9</accession>
<accession>Q79FK1</accession>
<accession>Q7D7X9</accession>
<comment type="function">
    <text evidence="1">Could be required for host endothelial-cell invasion and/or intracellular survival.</text>
</comment>
<comment type="induction">
    <text evidence="1">Highly up-regulated during the early stages of invasion of the human blood-brain barrier.</text>
</comment>
<comment type="disruption phenotype">
    <text evidence="1">Invasion of the infant human brain microvascular endothelial-cell monolayer is significantly decreased in transposon mutant.</text>
</comment>
<comment type="similarity">
    <text evidence="2">Belongs to the mycobacterial PPE family.</text>
</comment>
<protein>
    <recommendedName>
        <fullName>Uncharacterized PPE family protein PPE29</fullName>
    </recommendedName>
</protein>
<dbReference type="EMBL" id="AL123456">
    <property type="protein sequence ID" value="CCP44567.1"/>
    <property type="molecule type" value="Genomic_DNA"/>
</dbReference>
<dbReference type="PIR" id="B70931">
    <property type="entry name" value="B70931"/>
</dbReference>
<dbReference type="RefSeq" id="WP_003899026.1">
    <property type="nucleotide sequence ID" value="NZ_NVQJ01000037.1"/>
</dbReference>
<dbReference type="RefSeq" id="YP_177840.1">
    <property type="nucleotide sequence ID" value="NC_000962.3"/>
</dbReference>
<dbReference type="SMR" id="P9WI09"/>
<dbReference type="STRING" id="83332.Rv1801"/>
<dbReference type="PaxDb" id="83332-Rv1801"/>
<dbReference type="DNASU" id="885491"/>
<dbReference type="GeneID" id="885491"/>
<dbReference type="KEGG" id="mtu:Rv1801"/>
<dbReference type="KEGG" id="mtv:RVBD_1801"/>
<dbReference type="TubercuList" id="Rv1801"/>
<dbReference type="eggNOG" id="COG5651">
    <property type="taxonomic scope" value="Bacteria"/>
</dbReference>
<dbReference type="InParanoid" id="P9WI09"/>
<dbReference type="OrthoDB" id="4764495at2"/>
<dbReference type="PhylomeDB" id="P9WI09"/>
<dbReference type="Proteomes" id="UP000001584">
    <property type="component" value="Chromosome"/>
</dbReference>
<dbReference type="GO" id="GO:0009274">
    <property type="term" value="C:peptidoglycan-based cell wall"/>
    <property type="evidence" value="ECO:0007005"/>
    <property type="project" value="MTBBASE"/>
</dbReference>
<dbReference type="GO" id="GO:0052572">
    <property type="term" value="P:response to host immune response"/>
    <property type="evidence" value="ECO:0000318"/>
    <property type="project" value="GO_Central"/>
</dbReference>
<dbReference type="FunFam" id="1.20.1260.20:FF:000001">
    <property type="entry name" value="PPE family protein PPE41"/>
    <property type="match status" value="1"/>
</dbReference>
<dbReference type="Gene3D" id="1.20.1260.20">
    <property type="entry name" value="PPE superfamily"/>
    <property type="match status" value="1"/>
</dbReference>
<dbReference type="InterPro" id="IPR022171">
    <property type="entry name" value="PPE_C"/>
</dbReference>
<dbReference type="InterPro" id="IPR000030">
    <property type="entry name" value="PPE_dom"/>
</dbReference>
<dbReference type="InterPro" id="IPR038332">
    <property type="entry name" value="PPE_sf"/>
</dbReference>
<dbReference type="PANTHER" id="PTHR46766">
    <property type="entry name" value="GLUTAMINE-RICH PROTEIN 2"/>
    <property type="match status" value="1"/>
</dbReference>
<dbReference type="PANTHER" id="PTHR46766:SF1">
    <property type="entry name" value="GLUTAMINE-RICH PROTEIN 2"/>
    <property type="match status" value="1"/>
</dbReference>
<dbReference type="Pfam" id="PF00823">
    <property type="entry name" value="PPE"/>
    <property type="match status" value="1"/>
</dbReference>
<dbReference type="Pfam" id="PF12484">
    <property type="entry name" value="PPE-SVP"/>
    <property type="match status" value="1"/>
</dbReference>
<dbReference type="SUPFAM" id="SSF140459">
    <property type="entry name" value="PE/PPE dimer-like"/>
    <property type="match status" value="1"/>
</dbReference>
<evidence type="ECO:0000269" key="1">
    <source>
    </source>
</evidence>
<evidence type="ECO:0000305" key="2"/>
<keyword id="KW-1185">Reference proteome</keyword>
<name>PPE29_MYCTU</name>
<feature type="chain" id="PRO_0000378481" description="Uncharacterized PPE family protein PPE29">
    <location>
        <begin position="1"/>
        <end position="423"/>
    </location>
</feature>
<proteinExistence type="evidence at transcript level"/>
<organism>
    <name type="scientific">Mycobacterium tuberculosis (strain ATCC 25618 / H37Rv)</name>
    <dbReference type="NCBI Taxonomy" id="83332"/>
    <lineage>
        <taxon>Bacteria</taxon>
        <taxon>Bacillati</taxon>
        <taxon>Actinomycetota</taxon>
        <taxon>Actinomycetes</taxon>
        <taxon>Mycobacteriales</taxon>
        <taxon>Mycobacteriaceae</taxon>
        <taxon>Mycobacterium</taxon>
        <taxon>Mycobacterium tuberculosis complex</taxon>
    </lineage>
</organism>
<sequence length="423" mass="41477">MDFGLLPPEINSGRMYTGPGPGPMLAAATAWDGLAVELHATAAGYASELSALTGAWSGPSSTSMASAAAPYVAWMSATAVHAELAGAQARLAIAAYEAAFAATVPPPVIAANRAQLMVLIATNIFGQNTPAIMMTEAQYMEMWAQDAAAMYGYAGSSATASRMTAFTEPPQTTNHGQLGAQSSAVAQTAATAAGGNLQSAFPQLLSAVPRALQGLALPTASQSASATPQWVTDLGNLSTFLGGAVTGPYTFPGVLPPSGVPYLLGIQSVLVTQNGQGVSALLGKIGGKPITGALAPLAEFALHTPILGSEGLGGGSVSAGIGRAGLVGKLSVPQGWTVAAPEIPSPAAALQATRLAAAPIAATDGAGALLGGMALSGLAGRAAAGSTGHPIGSAAAPAVGAAAAAVEDLATEANIFVIPAMDD</sequence>
<gene>
    <name type="primary">PPE29</name>
    <name type="ordered locus">Rv1801</name>
</gene>